<organism>
    <name type="scientific">Huperzia lucidula</name>
    <name type="common">Shining clubmoss</name>
    <name type="synonym">Lycopodium lucidulum</name>
    <dbReference type="NCBI Taxonomy" id="37429"/>
    <lineage>
        <taxon>Eukaryota</taxon>
        <taxon>Viridiplantae</taxon>
        <taxon>Streptophyta</taxon>
        <taxon>Embryophyta</taxon>
        <taxon>Tracheophyta</taxon>
        <taxon>Lycopodiopsida</taxon>
        <taxon>Lycopodiales</taxon>
        <taxon>Lycopodiaceae</taxon>
        <taxon>Huperzioideae</taxon>
        <taxon>Huperzia</taxon>
    </lineage>
</organism>
<name>PSAA_HUPLU</name>
<gene>
    <name evidence="1" type="primary">psaA</name>
</gene>
<geneLocation type="chloroplast"/>
<comment type="function">
    <text>PsaA and PsaB bind P700, the primary electron donor of photosystem I (PSI), as well as the electron acceptors A0, A1 and FX. PSI is a plastocyanin-ferredoxin oxidoreductase, converting photonic excitation into a charge separation, which transfers an electron from the donor P700 chlorophyll pair to the spectroscopically characterized acceptors A0, A1, FX, FA and FB in turn. Oxidized P700 is reduced on the lumenal side of the thylakoid membrane by plastocyanin.</text>
</comment>
<comment type="catalytic activity">
    <reaction evidence="1">
        <text>reduced [plastocyanin] + hnu + oxidized [2Fe-2S]-[ferredoxin] = oxidized [plastocyanin] + reduced [2Fe-2S]-[ferredoxin]</text>
        <dbReference type="Rhea" id="RHEA:30407"/>
        <dbReference type="Rhea" id="RHEA-COMP:10000"/>
        <dbReference type="Rhea" id="RHEA-COMP:10001"/>
        <dbReference type="Rhea" id="RHEA-COMP:10039"/>
        <dbReference type="Rhea" id="RHEA-COMP:10040"/>
        <dbReference type="ChEBI" id="CHEBI:29036"/>
        <dbReference type="ChEBI" id="CHEBI:30212"/>
        <dbReference type="ChEBI" id="CHEBI:33737"/>
        <dbReference type="ChEBI" id="CHEBI:33738"/>
        <dbReference type="ChEBI" id="CHEBI:49552"/>
        <dbReference type="EC" id="1.97.1.12"/>
    </reaction>
</comment>
<comment type="cofactor">
    <text evidence="1">P700 is a chlorophyll a/chlorophyll a' dimer, A0 is one or more chlorophyll a, A1 is one or both phylloquinones and FX is a shared 4Fe-4S iron-sulfur center.</text>
</comment>
<comment type="subunit">
    <text evidence="1">The PsaA/B heterodimer binds the P700 chlorophyll special pair and subsequent electron acceptors. PSI consists of a core antenna complex that captures photons, and an electron transfer chain that converts photonic excitation into a charge separation. The eukaryotic PSI reaction center is composed of at least 11 subunits.</text>
</comment>
<comment type="subcellular location">
    <subcellularLocation>
        <location evidence="1">Plastid</location>
        <location evidence="1">Chloroplast thylakoid membrane</location>
        <topology evidence="1">Multi-pass membrane protein</topology>
    </subcellularLocation>
</comment>
<comment type="similarity">
    <text evidence="1">Belongs to the PsaA/PsaB family.</text>
</comment>
<evidence type="ECO:0000255" key="1">
    <source>
        <dbReference type="HAMAP-Rule" id="MF_00458"/>
    </source>
</evidence>
<reference key="1">
    <citation type="journal article" date="2005" name="Gene">
        <title>The first complete chloroplast genome sequence of a lycophyte, Huperzia lucidula (Lycopodiaceae).</title>
        <authorList>
            <person name="Wolf P.G."/>
            <person name="Karol K.G."/>
            <person name="Mandoli D.F."/>
            <person name="Kuehl J.V."/>
            <person name="Arumuganathan K."/>
            <person name="Ellis M.W."/>
            <person name="Mishler B.D."/>
            <person name="Kelch D.G."/>
            <person name="Olmstead R.G."/>
            <person name="Boore J.L."/>
        </authorList>
    </citation>
    <scope>NUCLEOTIDE SEQUENCE [LARGE SCALE GENOMIC DNA]</scope>
</reference>
<sequence>MTIRSPEPEVKIAVERDPVKTSFEKWAQPGHFSRTLAKGPSTTTWIWNLHADAHDFDSHTNDLEEISRKVFSAHFGQLAIIFIWLSGMYFHGARFSNHEAWLSDPTHVKPSAQVVWPIVGQEILNGDVGGGFQGIQITSGFFQIWRASGITSELQLYSTAIGGLIFAALMLFAGWFHYHKAAPKLTWFQDVESMLNHHLAGLLGLGSLSWAGHQVHVSLPINQLLDAGVDAKEIPLPHEFILNRDLMTQLYPSFAKGLTPFFTLNWSEYSDFSTFRGGLNPVTGGLWLTDTVHHHLAIAVLFLIAGHMYRTNWGIGHSLKEILEAHKGPFTGEGHKGLYEIFTTSWHAQLALNLAMLGSLTIVVAHHMYSMPPYPYLATDYGTQLSLFTHHMWIGGFLVVGAAAHAAIFMVRDYDPTTQYNNLLDRVLRHRDAIVSHLNWACIFLGFHSFGLYIHNDTMSALGRPQDMFSDTAIQLQPIFAQWVQNTHAVAPFSTAPNAAASTSLTWGGIDLVAVGGKVALLPIPLGTADFLVHHIHAFTIHVTVLILLKGVLFARSSRLIPDKANLGFRFPCDGPGRGGTCQVSAWDHVFLGLFWMYNAISVVIFHFSWKMQSDVWGSVSDQKIVTHITGGNFAQSSITINGWLRDFLWAQASQVIQSHGSSLSAYGLPFLGAHFVWAFSLMFLFSGRGYWQELIESIVWAHNKLKVAPAIQPRALSIVQGRAVGVAHYLLGGIATTWAFFLARIIAVG</sequence>
<keyword id="KW-0004">4Fe-4S</keyword>
<keyword id="KW-0148">Chlorophyll</keyword>
<keyword id="KW-0150">Chloroplast</keyword>
<keyword id="KW-0157">Chromophore</keyword>
<keyword id="KW-0249">Electron transport</keyword>
<keyword id="KW-0408">Iron</keyword>
<keyword id="KW-0411">Iron-sulfur</keyword>
<keyword id="KW-0460">Magnesium</keyword>
<keyword id="KW-0472">Membrane</keyword>
<keyword id="KW-0479">Metal-binding</keyword>
<keyword id="KW-0560">Oxidoreductase</keyword>
<keyword id="KW-0602">Photosynthesis</keyword>
<keyword id="KW-0603">Photosystem I</keyword>
<keyword id="KW-0934">Plastid</keyword>
<keyword id="KW-0793">Thylakoid</keyword>
<keyword id="KW-0812">Transmembrane</keyword>
<keyword id="KW-1133">Transmembrane helix</keyword>
<keyword id="KW-0813">Transport</keyword>
<proteinExistence type="inferred from homology"/>
<protein>
    <recommendedName>
        <fullName evidence="1">Photosystem I P700 chlorophyll a apoprotein A1</fullName>
        <ecNumber evidence="1">1.97.1.12</ecNumber>
    </recommendedName>
    <alternativeName>
        <fullName evidence="1">PSI-A</fullName>
    </alternativeName>
    <alternativeName>
        <fullName evidence="1">PsaA</fullName>
    </alternativeName>
</protein>
<dbReference type="EC" id="1.97.1.12" evidence="1"/>
<dbReference type="EMBL" id="AY660566">
    <property type="protein sequence ID" value="AAT80725.1"/>
    <property type="molecule type" value="Genomic_DNA"/>
</dbReference>
<dbReference type="RefSeq" id="YP_209529.1">
    <property type="nucleotide sequence ID" value="NC_006861.1"/>
</dbReference>
<dbReference type="SMR" id="Q5SD06"/>
<dbReference type="GeneID" id="3283750"/>
<dbReference type="GO" id="GO:0009535">
    <property type="term" value="C:chloroplast thylakoid membrane"/>
    <property type="evidence" value="ECO:0007669"/>
    <property type="project" value="UniProtKB-SubCell"/>
</dbReference>
<dbReference type="GO" id="GO:0009522">
    <property type="term" value="C:photosystem I"/>
    <property type="evidence" value="ECO:0007669"/>
    <property type="project" value="UniProtKB-KW"/>
</dbReference>
<dbReference type="GO" id="GO:0051539">
    <property type="term" value="F:4 iron, 4 sulfur cluster binding"/>
    <property type="evidence" value="ECO:0007669"/>
    <property type="project" value="UniProtKB-KW"/>
</dbReference>
<dbReference type="GO" id="GO:0016168">
    <property type="term" value="F:chlorophyll binding"/>
    <property type="evidence" value="ECO:0007669"/>
    <property type="project" value="UniProtKB-KW"/>
</dbReference>
<dbReference type="GO" id="GO:0009055">
    <property type="term" value="F:electron transfer activity"/>
    <property type="evidence" value="ECO:0007669"/>
    <property type="project" value="UniProtKB-UniRule"/>
</dbReference>
<dbReference type="GO" id="GO:0000287">
    <property type="term" value="F:magnesium ion binding"/>
    <property type="evidence" value="ECO:0007669"/>
    <property type="project" value="UniProtKB-UniRule"/>
</dbReference>
<dbReference type="GO" id="GO:0016491">
    <property type="term" value="F:oxidoreductase activity"/>
    <property type="evidence" value="ECO:0007669"/>
    <property type="project" value="UniProtKB-KW"/>
</dbReference>
<dbReference type="GO" id="GO:0015979">
    <property type="term" value="P:photosynthesis"/>
    <property type="evidence" value="ECO:0007669"/>
    <property type="project" value="UniProtKB-UniRule"/>
</dbReference>
<dbReference type="FunFam" id="1.20.1130.10:FF:000001">
    <property type="entry name" value="Photosystem I P700 chlorophyll a apoprotein A2"/>
    <property type="match status" value="1"/>
</dbReference>
<dbReference type="Gene3D" id="1.20.1130.10">
    <property type="entry name" value="Photosystem I PsaA/PsaB"/>
    <property type="match status" value="1"/>
</dbReference>
<dbReference type="HAMAP" id="MF_00458">
    <property type="entry name" value="PSI_PsaA"/>
    <property type="match status" value="1"/>
</dbReference>
<dbReference type="InterPro" id="IPR006243">
    <property type="entry name" value="PSI_PsaA"/>
</dbReference>
<dbReference type="InterPro" id="IPR001280">
    <property type="entry name" value="PSI_PsaA/B"/>
</dbReference>
<dbReference type="InterPro" id="IPR020586">
    <property type="entry name" value="PSI_PsaA/B_CS"/>
</dbReference>
<dbReference type="InterPro" id="IPR036408">
    <property type="entry name" value="PSI_PsaA/B_sf"/>
</dbReference>
<dbReference type="NCBIfam" id="TIGR01335">
    <property type="entry name" value="psaA"/>
    <property type="match status" value="1"/>
</dbReference>
<dbReference type="PANTHER" id="PTHR30128">
    <property type="entry name" value="OUTER MEMBRANE PROTEIN, OMPA-RELATED"/>
    <property type="match status" value="1"/>
</dbReference>
<dbReference type="PANTHER" id="PTHR30128:SF19">
    <property type="entry name" value="PHOTOSYSTEM I P700 CHLOROPHYLL A APOPROTEIN A1-RELATED"/>
    <property type="match status" value="1"/>
</dbReference>
<dbReference type="Pfam" id="PF00223">
    <property type="entry name" value="PsaA_PsaB"/>
    <property type="match status" value="1"/>
</dbReference>
<dbReference type="PIRSF" id="PIRSF002905">
    <property type="entry name" value="PSI_A"/>
    <property type="match status" value="1"/>
</dbReference>
<dbReference type="PRINTS" id="PR00257">
    <property type="entry name" value="PHOTSYSPSAAB"/>
</dbReference>
<dbReference type="SUPFAM" id="SSF81558">
    <property type="entry name" value="Photosystem I subunits PsaA/PsaB"/>
    <property type="match status" value="1"/>
</dbReference>
<dbReference type="PROSITE" id="PS00419">
    <property type="entry name" value="PHOTOSYSTEM_I_PSAAB"/>
    <property type="match status" value="1"/>
</dbReference>
<accession>Q5SD06</accession>
<feature type="chain" id="PRO_0000088554" description="Photosystem I P700 chlorophyll a apoprotein A1">
    <location>
        <begin position="1"/>
        <end position="750"/>
    </location>
</feature>
<feature type="transmembrane region" description="Helical; Name=I" evidence="1">
    <location>
        <begin position="70"/>
        <end position="93"/>
    </location>
</feature>
<feature type="transmembrane region" description="Helical; Name=II" evidence="1">
    <location>
        <begin position="156"/>
        <end position="179"/>
    </location>
</feature>
<feature type="transmembrane region" description="Helical; Name=III" evidence="1">
    <location>
        <begin position="195"/>
        <end position="219"/>
    </location>
</feature>
<feature type="transmembrane region" description="Helical; Name=IV" evidence="1">
    <location>
        <begin position="291"/>
        <end position="309"/>
    </location>
</feature>
<feature type="transmembrane region" description="Helical; Name=V" evidence="1">
    <location>
        <begin position="346"/>
        <end position="369"/>
    </location>
</feature>
<feature type="transmembrane region" description="Helical; Name=VI" evidence="1">
    <location>
        <begin position="385"/>
        <end position="411"/>
    </location>
</feature>
<feature type="transmembrane region" description="Helical; Name=VII" evidence="1">
    <location>
        <begin position="433"/>
        <end position="455"/>
    </location>
</feature>
<feature type="transmembrane region" description="Helical; Name=VIII" evidence="1">
    <location>
        <begin position="531"/>
        <end position="549"/>
    </location>
</feature>
<feature type="transmembrane region" description="Helical; Name=IX" evidence="1">
    <location>
        <begin position="589"/>
        <end position="610"/>
    </location>
</feature>
<feature type="transmembrane region" description="Helical; Name=X" evidence="1">
    <location>
        <begin position="664"/>
        <end position="686"/>
    </location>
</feature>
<feature type="transmembrane region" description="Helical; Name=XI" evidence="1">
    <location>
        <begin position="724"/>
        <end position="744"/>
    </location>
</feature>
<feature type="binding site" evidence="1">
    <location>
        <position position="573"/>
    </location>
    <ligand>
        <name>[4Fe-4S] cluster</name>
        <dbReference type="ChEBI" id="CHEBI:49883"/>
        <note>ligand shared between dimeric partners</note>
    </ligand>
</feature>
<feature type="binding site" evidence="1">
    <location>
        <position position="582"/>
    </location>
    <ligand>
        <name>[4Fe-4S] cluster</name>
        <dbReference type="ChEBI" id="CHEBI:49883"/>
        <note>ligand shared between dimeric partners</note>
    </ligand>
</feature>
<feature type="binding site" description="axial binding residue" evidence="1">
    <location>
        <position position="675"/>
    </location>
    <ligand>
        <name>chlorophyll a'</name>
        <dbReference type="ChEBI" id="CHEBI:189419"/>
        <label>A1</label>
    </ligand>
    <ligandPart>
        <name>Mg</name>
        <dbReference type="ChEBI" id="CHEBI:25107"/>
    </ligandPart>
</feature>
<feature type="binding site" description="axial binding residue" evidence="1">
    <location>
        <position position="683"/>
    </location>
    <ligand>
        <name>chlorophyll a</name>
        <dbReference type="ChEBI" id="CHEBI:58416"/>
        <label>A3</label>
    </ligand>
    <ligandPart>
        <name>Mg</name>
        <dbReference type="ChEBI" id="CHEBI:25107"/>
    </ligandPart>
</feature>
<feature type="binding site" evidence="1">
    <location>
        <position position="691"/>
    </location>
    <ligand>
        <name>chlorophyll a</name>
        <dbReference type="ChEBI" id="CHEBI:58416"/>
        <label>A3</label>
    </ligand>
</feature>
<feature type="binding site" evidence="1">
    <location>
        <position position="692"/>
    </location>
    <ligand>
        <name>phylloquinone</name>
        <dbReference type="ChEBI" id="CHEBI:18067"/>
        <label>A</label>
    </ligand>
</feature>